<geneLocation type="mitochondrion"/>
<name>NU5M_TALMA</name>
<organism>
    <name type="scientific">Talaromyces marneffei</name>
    <name type="common">Penicillium marneffei</name>
    <dbReference type="NCBI Taxonomy" id="37727"/>
    <lineage>
        <taxon>Eukaryota</taxon>
        <taxon>Fungi</taxon>
        <taxon>Dikarya</taxon>
        <taxon>Ascomycota</taxon>
        <taxon>Pezizomycotina</taxon>
        <taxon>Eurotiomycetes</taxon>
        <taxon>Eurotiomycetidae</taxon>
        <taxon>Eurotiales</taxon>
        <taxon>Trichocomaceae</taxon>
        <taxon>Talaromyces</taxon>
        <taxon>Talaromyces sect. Talaromyces</taxon>
    </lineage>
</organism>
<gene>
    <name type="primary">nad5</name>
</gene>
<protein>
    <recommendedName>
        <fullName>NADH-ubiquinone oxidoreductase chain 5</fullName>
        <ecNumber>7.1.1.2</ecNumber>
    </recommendedName>
</protein>
<feature type="chain" id="PRO_0000118129" description="NADH-ubiquinone oxidoreductase chain 5">
    <location>
        <begin position="1"/>
        <end position="658"/>
    </location>
</feature>
<feature type="transmembrane region" description="Helical" evidence="2">
    <location>
        <begin position="4"/>
        <end position="23"/>
    </location>
</feature>
<feature type="transmembrane region" description="Helical" evidence="2">
    <location>
        <begin position="30"/>
        <end position="52"/>
    </location>
</feature>
<feature type="transmembrane region" description="Helical" evidence="2">
    <location>
        <begin position="81"/>
        <end position="103"/>
    </location>
</feature>
<feature type="transmembrane region" description="Helical" evidence="2">
    <location>
        <begin position="112"/>
        <end position="129"/>
    </location>
</feature>
<feature type="transmembrane region" description="Helical" evidence="2">
    <location>
        <begin position="133"/>
        <end position="155"/>
    </location>
</feature>
<feature type="transmembrane region" description="Helical" evidence="2">
    <location>
        <begin position="168"/>
        <end position="190"/>
    </location>
</feature>
<feature type="transmembrane region" description="Helical" evidence="2">
    <location>
        <begin position="200"/>
        <end position="222"/>
    </location>
</feature>
<feature type="transmembrane region" description="Helical" evidence="2">
    <location>
        <begin position="243"/>
        <end position="262"/>
    </location>
</feature>
<feature type="transmembrane region" description="Helical" evidence="2">
    <location>
        <begin position="272"/>
        <end position="294"/>
    </location>
</feature>
<feature type="transmembrane region" description="Helical" evidence="2">
    <location>
        <begin position="301"/>
        <end position="319"/>
    </location>
</feature>
<feature type="transmembrane region" description="Helical" evidence="2">
    <location>
        <begin position="329"/>
        <end position="351"/>
    </location>
</feature>
<feature type="transmembrane region" description="Helical" evidence="2">
    <location>
        <begin position="364"/>
        <end position="386"/>
    </location>
</feature>
<feature type="transmembrane region" description="Helical" evidence="2">
    <location>
        <begin position="409"/>
        <end position="431"/>
    </location>
</feature>
<feature type="transmembrane region" description="Helical" evidence="2">
    <location>
        <begin position="452"/>
        <end position="471"/>
    </location>
</feature>
<feature type="transmembrane region" description="Helical" evidence="2">
    <location>
        <begin position="505"/>
        <end position="527"/>
    </location>
</feature>
<feature type="transmembrane region" description="Helical" evidence="2">
    <location>
        <begin position="607"/>
        <end position="629"/>
    </location>
</feature>
<feature type="transmembrane region" description="Helical" evidence="2">
    <location>
        <begin position="639"/>
        <end position="656"/>
    </location>
</feature>
<reference key="1">
    <citation type="journal article" date="2003" name="FEBS Lett.">
        <title>The mitochondrial genome of the thermal dimorphic fungus Penicillium marneffei is more closely related to those of molds than yeasts.</title>
        <authorList>
            <person name="Woo P.C.Y."/>
            <person name="Zhen H."/>
            <person name="Cai J.J."/>
            <person name="Yu J."/>
            <person name="Lau S.K.P."/>
            <person name="Wang J."/>
            <person name="Teng J.L.L."/>
            <person name="Wong S.S.Y."/>
            <person name="Tse R.H."/>
            <person name="Chen R."/>
            <person name="Yang H."/>
            <person name="Liu B."/>
            <person name="Yuen K.-Y."/>
        </authorList>
    </citation>
    <scope>NUCLEOTIDE SEQUENCE [LARGE SCALE GENOMIC DNA]</scope>
    <source>
        <strain>MP1</strain>
    </source>
</reference>
<comment type="function">
    <text evidence="1">Core subunit of the mitochondrial membrane respiratory chain NADH dehydrogenase (Complex I) that is believed to belong to the minimal assembly required for catalysis. Complex I functions in the transfer of electrons from NADH to the respiratory chain. The immediate electron acceptor for the enzyme is believed to be ubiquinone (By similarity).</text>
</comment>
<comment type="catalytic activity">
    <reaction>
        <text>a ubiquinone + NADH + 5 H(+)(in) = a ubiquinol + NAD(+) + 4 H(+)(out)</text>
        <dbReference type="Rhea" id="RHEA:29091"/>
        <dbReference type="Rhea" id="RHEA-COMP:9565"/>
        <dbReference type="Rhea" id="RHEA-COMP:9566"/>
        <dbReference type="ChEBI" id="CHEBI:15378"/>
        <dbReference type="ChEBI" id="CHEBI:16389"/>
        <dbReference type="ChEBI" id="CHEBI:17976"/>
        <dbReference type="ChEBI" id="CHEBI:57540"/>
        <dbReference type="ChEBI" id="CHEBI:57945"/>
        <dbReference type="EC" id="7.1.1.2"/>
    </reaction>
</comment>
<comment type="subcellular location">
    <subcellularLocation>
        <location evidence="1">Mitochondrion inner membrane</location>
        <topology evidence="1">Multi-pass membrane protein</topology>
    </subcellularLocation>
</comment>
<comment type="similarity">
    <text evidence="3">Belongs to the complex I subunit 5 family.</text>
</comment>
<dbReference type="EC" id="7.1.1.2"/>
<dbReference type="EMBL" id="AY347307">
    <property type="protein sequence ID" value="AAQ54911.1"/>
    <property type="molecule type" value="Genomic_DNA"/>
</dbReference>
<dbReference type="RefSeq" id="NP_943710.1">
    <property type="nucleotide sequence ID" value="NC_005256.1"/>
</dbReference>
<dbReference type="SMR" id="Q6V9D9"/>
<dbReference type="GeneID" id="2657820"/>
<dbReference type="VEuPathDB" id="FungiDB:PMAA_m0550"/>
<dbReference type="GO" id="GO:0005743">
    <property type="term" value="C:mitochondrial inner membrane"/>
    <property type="evidence" value="ECO:0007669"/>
    <property type="project" value="UniProtKB-SubCell"/>
</dbReference>
<dbReference type="GO" id="GO:0008137">
    <property type="term" value="F:NADH dehydrogenase (ubiquinone) activity"/>
    <property type="evidence" value="ECO:0007669"/>
    <property type="project" value="UniProtKB-EC"/>
</dbReference>
<dbReference type="GO" id="GO:0042773">
    <property type="term" value="P:ATP synthesis coupled electron transport"/>
    <property type="evidence" value="ECO:0007669"/>
    <property type="project" value="InterPro"/>
</dbReference>
<dbReference type="GO" id="GO:0015990">
    <property type="term" value="P:electron transport coupled proton transport"/>
    <property type="evidence" value="ECO:0007669"/>
    <property type="project" value="TreeGrafter"/>
</dbReference>
<dbReference type="Gene3D" id="1.20.5.2700">
    <property type="match status" value="1"/>
</dbReference>
<dbReference type="InterPro" id="IPR010934">
    <property type="entry name" value="NADH_DH_su5_C"/>
</dbReference>
<dbReference type="InterPro" id="IPR018393">
    <property type="entry name" value="NADHpl_OxRdtase_5_subgr"/>
</dbReference>
<dbReference type="InterPro" id="IPR001750">
    <property type="entry name" value="ND/Mrp_TM"/>
</dbReference>
<dbReference type="InterPro" id="IPR003945">
    <property type="entry name" value="NU5C-like"/>
</dbReference>
<dbReference type="InterPro" id="IPR001516">
    <property type="entry name" value="Proton_antipo_N"/>
</dbReference>
<dbReference type="NCBIfam" id="TIGR01974">
    <property type="entry name" value="NDH_I_L"/>
    <property type="match status" value="1"/>
</dbReference>
<dbReference type="NCBIfam" id="NF005141">
    <property type="entry name" value="PRK06590.1"/>
    <property type="match status" value="1"/>
</dbReference>
<dbReference type="PANTHER" id="PTHR42829">
    <property type="entry name" value="NADH-UBIQUINONE OXIDOREDUCTASE CHAIN 5"/>
    <property type="match status" value="1"/>
</dbReference>
<dbReference type="PANTHER" id="PTHR42829:SF2">
    <property type="entry name" value="NADH-UBIQUINONE OXIDOREDUCTASE CHAIN 5"/>
    <property type="match status" value="1"/>
</dbReference>
<dbReference type="Pfam" id="PF06455">
    <property type="entry name" value="NADH5_C"/>
    <property type="match status" value="1"/>
</dbReference>
<dbReference type="Pfam" id="PF00361">
    <property type="entry name" value="Proton_antipo_M"/>
    <property type="match status" value="1"/>
</dbReference>
<dbReference type="Pfam" id="PF00662">
    <property type="entry name" value="Proton_antipo_N"/>
    <property type="match status" value="1"/>
</dbReference>
<dbReference type="PRINTS" id="PR01434">
    <property type="entry name" value="NADHDHGNASE5"/>
</dbReference>
<evidence type="ECO:0000250" key="1"/>
<evidence type="ECO:0000255" key="2"/>
<evidence type="ECO:0000305" key="3"/>
<keyword id="KW-0249">Electron transport</keyword>
<keyword id="KW-0472">Membrane</keyword>
<keyword id="KW-0496">Mitochondrion</keyword>
<keyword id="KW-0999">Mitochondrion inner membrane</keyword>
<keyword id="KW-0520">NAD</keyword>
<keyword id="KW-0679">Respiratory chain</keyword>
<keyword id="KW-1278">Translocase</keyword>
<keyword id="KW-0812">Transmembrane</keyword>
<keyword id="KW-1133">Transmembrane helix</keyword>
<keyword id="KW-0813">Transport</keyword>
<keyword id="KW-0830">Ubiquinone</keyword>
<accession>Q6V9D9</accession>
<proteinExistence type="inferred from homology"/>
<sequence>MYLTLIVLPLLGSISSGFFGRKIGVSGSHIITCSSVILTTLLALLAFIEVGINNIPVTIDVARWIDAEALNVMWSFKFDSLTVSMLIPVLIVSSLVHIYSISYMSHDPHNQRFFSYLSLFTFMMIILVTGNNYLLMFVGWEGVGICSYLLINFWFTRIAANQSSISALLTNRVGDCFLTIGIFAMLWSFGNIDYNLIFSLAPYYNENIITMIGICLVIGATAKSSQVGLHIWLPQAMEGPTPVSALIHAATMVTAGVYLLMRSSPLIEYSSTVLIICLWLGAITTVFSSLIGLFQQDIKKVIAYSTMSQLGMMVIGIGLSSYNIALFHLVNHAFYKALLFLGAGAVIHSVADNQDFRKYGGLRPFLPLTYSVMLIASLSLVAVPFMTGFYSKDLILESAYGQFYLSGTIVYFIATIGAMFTTLYSAKVLYLTFLTNPNGPLNNYKYAHEGDLFLNIPLIILAVFSIFFGFLTKDIFIGLGTGFFSDNSLFIHPNHEILLDTEFAVPVLFKLLPFFFTISLSILSILYSEFTPNLLINFKFSTLGYNIFSFFNQRFYIELLYNKYIVENILTLGGQTTKSLDKGSVEYLGPYGLEKGLLNLSNSINNLSTGVVTTYALYILMGLMFYISTLYFFNWDSNLLILIIFSLFVILNNKLLQK</sequence>